<evidence type="ECO:0000256" key="1">
    <source>
        <dbReference type="SAM" id="MobiDB-lite"/>
    </source>
</evidence>
<evidence type="ECO:0000305" key="2"/>
<name>F90A8_HUMAN</name>
<comment type="similarity">
    <text evidence="2">Belongs to the FAM90 family.</text>
</comment>
<accession>A6NJQ4</accession>
<sequence length="464" mass="49661">MMARRDPKSWAKRLVRAQTLQKQRRAPVGPSAPPPDEEDPRLKCKNCGAFGHTARSTRCPMKCWKAALVPATLGKKEGKENLKPWKPRGEANPGPLNKDKGEKEERPRQQDPQRKALLHMFSGKPPEKPLPNGKGSTESSDHLRVASGPMPVHTTSKRPRVDPVLADRSAAEMSGRGSVLASLSPLRKASLSSSSSLGPKERQTGAAADIPQPAVRHQGREPLLVVKPTHSRPEGGCREVPQAASKTHGLLQAARPQAQDKRPAVTSQPCPPAATHSLGLGSNLSFGPGAKRPAQAPIQACLNFPKKPRLGPFQIPESAIQGGELGAPENLQPPPAATELGPSTSPQMGRRTPAQVPSIDRQPPHSTPCLPTAQACTMSHHSAASHDGAQPLRVLFRRLENGRWSSSLLAAPSFHSPEKPGAFLAQSPHVSEKSEAPCVRVPPSVLYEDLQVSSSSEDSDSDLE</sequence>
<gene>
    <name type="primary">FAM90A8</name>
    <name type="synonym">FAM90A8P</name>
</gene>
<keyword id="KW-1185">Reference proteome</keyword>
<protein>
    <recommendedName>
        <fullName>Protein FAM90A8</fullName>
    </recommendedName>
</protein>
<reference key="1">
    <citation type="journal article" date="2006" name="Nature">
        <title>DNA sequence and analysis of human chromosome 8.</title>
        <authorList>
            <person name="Nusbaum C."/>
            <person name="Mikkelsen T.S."/>
            <person name="Zody M.C."/>
            <person name="Asakawa S."/>
            <person name="Taudien S."/>
            <person name="Garber M."/>
            <person name="Kodira C.D."/>
            <person name="Schueler M.G."/>
            <person name="Shimizu A."/>
            <person name="Whittaker C.A."/>
            <person name="Chang J.L."/>
            <person name="Cuomo C.A."/>
            <person name="Dewar K."/>
            <person name="FitzGerald M.G."/>
            <person name="Yang X."/>
            <person name="Allen N.R."/>
            <person name="Anderson S."/>
            <person name="Asakawa T."/>
            <person name="Blechschmidt K."/>
            <person name="Bloom T."/>
            <person name="Borowsky M.L."/>
            <person name="Butler J."/>
            <person name="Cook A."/>
            <person name="Corum B."/>
            <person name="DeArellano K."/>
            <person name="DeCaprio D."/>
            <person name="Dooley K.T."/>
            <person name="Dorris L. III"/>
            <person name="Engels R."/>
            <person name="Gloeckner G."/>
            <person name="Hafez N."/>
            <person name="Hagopian D.S."/>
            <person name="Hall J.L."/>
            <person name="Ishikawa S.K."/>
            <person name="Jaffe D.B."/>
            <person name="Kamat A."/>
            <person name="Kudoh J."/>
            <person name="Lehmann R."/>
            <person name="Lokitsang T."/>
            <person name="Macdonald P."/>
            <person name="Major J.E."/>
            <person name="Matthews C.D."/>
            <person name="Mauceli E."/>
            <person name="Menzel U."/>
            <person name="Mihalev A.H."/>
            <person name="Minoshima S."/>
            <person name="Murayama Y."/>
            <person name="Naylor J.W."/>
            <person name="Nicol R."/>
            <person name="Nguyen C."/>
            <person name="O'Leary S.B."/>
            <person name="O'Neill K."/>
            <person name="Parker S.C.J."/>
            <person name="Polley A."/>
            <person name="Raymond C.K."/>
            <person name="Reichwald K."/>
            <person name="Rodriguez J."/>
            <person name="Sasaki T."/>
            <person name="Schilhabel M."/>
            <person name="Siddiqui R."/>
            <person name="Smith C.L."/>
            <person name="Sneddon T.P."/>
            <person name="Talamas J.A."/>
            <person name="Tenzin P."/>
            <person name="Topham K."/>
            <person name="Venkataraman V."/>
            <person name="Wen G."/>
            <person name="Yamazaki S."/>
            <person name="Young S.K."/>
            <person name="Zeng Q."/>
            <person name="Zimmer A.R."/>
            <person name="Rosenthal A."/>
            <person name="Birren B.W."/>
            <person name="Platzer M."/>
            <person name="Shimizu N."/>
            <person name="Lander E.S."/>
        </authorList>
    </citation>
    <scope>NUCLEOTIDE SEQUENCE [LARGE SCALE GENOMIC DNA]</scope>
</reference>
<dbReference type="EMBL" id="AC084121">
    <property type="status" value="NOT_ANNOTATED_CDS"/>
    <property type="molecule type" value="Genomic_DNA"/>
</dbReference>
<dbReference type="RefSeq" id="NP_001157922.1">
    <property type="nucleotide sequence ID" value="NM_001164450.1"/>
</dbReference>
<dbReference type="BioMuta" id="HGNC:32256"/>
<dbReference type="MassIVE" id="A6NJQ4"/>
<dbReference type="Ensembl" id="ENST00000647775.1">
    <property type="protein sequence ID" value="ENSP00000498128.1"/>
    <property type="gene ID" value="ENSG00000285937.1"/>
</dbReference>
<dbReference type="GeneID" id="441324"/>
<dbReference type="MANE-Select" id="ENST00000647775.1">
    <property type="protein sequence ID" value="ENSP00000498128.1"/>
    <property type="RefSeq nucleotide sequence ID" value="NM_001164450.1"/>
    <property type="RefSeq protein sequence ID" value="NP_001157922.1"/>
</dbReference>
<dbReference type="AGR" id="HGNC:32256"/>
<dbReference type="GeneCards" id="FAM90A8"/>
<dbReference type="HGNC" id="HGNC:32256">
    <property type="gene designation" value="FAM90A8"/>
</dbReference>
<dbReference type="HPA" id="ENSG00000285937">
    <property type="expression patterns" value="Not detected"/>
</dbReference>
<dbReference type="MIM" id="613045">
    <property type="type" value="gene"/>
</dbReference>
<dbReference type="neXtProt" id="NX_A6NJQ4"/>
<dbReference type="VEuPathDB" id="HostDB:ENSG00000285937"/>
<dbReference type="GeneTree" id="ENSGT00910000144208"/>
<dbReference type="InParanoid" id="A6NJQ4"/>
<dbReference type="OMA" id="RPAHEHF"/>
<dbReference type="PAN-GO" id="A6NJQ4">
    <property type="GO annotations" value="0 GO annotations based on evolutionary models"/>
</dbReference>
<dbReference type="PhylomeDB" id="A6NJQ4"/>
<dbReference type="Pharos" id="A6NJQ4">
    <property type="development level" value="Tdark"/>
</dbReference>
<dbReference type="Proteomes" id="UP000005640">
    <property type="component" value="Chromosome 8"/>
</dbReference>
<dbReference type="RNAct" id="A6NJQ4">
    <property type="molecule type" value="protein"/>
</dbReference>
<dbReference type="InterPro" id="IPR039213">
    <property type="entry name" value="FAM90"/>
</dbReference>
<dbReference type="InterPro" id="IPR041670">
    <property type="entry name" value="Znf-CCHC_6"/>
</dbReference>
<dbReference type="PANTHER" id="PTHR16035:SF14">
    <property type="entry name" value="FAMILY WITH SEQUENCE SIMILARITY 90 MEMBER A11, PSEUDOGENE-RELATED"/>
    <property type="match status" value="1"/>
</dbReference>
<dbReference type="PANTHER" id="PTHR16035">
    <property type="entry name" value="PROTEIN FAM90A1"/>
    <property type="match status" value="1"/>
</dbReference>
<dbReference type="Pfam" id="PF15288">
    <property type="entry name" value="zf-CCHC_6"/>
    <property type="match status" value="1"/>
</dbReference>
<feature type="chain" id="PRO_0000299594" description="Protein FAM90A8">
    <location>
        <begin position="1"/>
        <end position="464"/>
    </location>
</feature>
<feature type="region of interest" description="Disordered" evidence="1">
    <location>
        <begin position="1"/>
        <end position="42"/>
    </location>
</feature>
<feature type="region of interest" description="Disordered" evidence="1">
    <location>
        <begin position="69"/>
        <end position="389"/>
    </location>
</feature>
<feature type="region of interest" description="Disordered" evidence="1">
    <location>
        <begin position="415"/>
        <end position="437"/>
    </location>
</feature>
<feature type="compositionally biased region" description="Basic and acidic residues" evidence="1">
    <location>
        <begin position="74"/>
        <end position="89"/>
    </location>
</feature>
<feature type="compositionally biased region" description="Basic and acidic residues" evidence="1">
    <location>
        <begin position="97"/>
        <end position="114"/>
    </location>
</feature>
<feature type="compositionally biased region" description="Low complexity" evidence="1">
    <location>
        <begin position="180"/>
        <end position="197"/>
    </location>
</feature>
<organism>
    <name type="scientific">Homo sapiens</name>
    <name type="common">Human</name>
    <dbReference type="NCBI Taxonomy" id="9606"/>
    <lineage>
        <taxon>Eukaryota</taxon>
        <taxon>Metazoa</taxon>
        <taxon>Chordata</taxon>
        <taxon>Craniata</taxon>
        <taxon>Vertebrata</taxon>
        <taxon>Euteleostomi</taxon>
        <taxon>Mammalia</taxon>
        <taxon>Eutheria</taxon>
        <taxon>Euarchontoglires</taxon>
        <taxon>Primates</taxon>
        <taxon>Haplorrhini</taxon>
        <taxon>Catarrhini</taxon>
        <taxon>Hominidae</taxon>
        <taxon>Homo</taxon>
    </lineage>
</organism>
<proteinExistence type="inferred from homology"/>